<comment type="function">
    <text evidence="1">Catalyzes the attachment of proline to tRNA(Pro) in a two-step reaction: proline is first activated by ATP to form Pro-AMP and then transferred to the acceptor end of tRNA(Pro).</text>
</comment>
<comment type="catalytic activity">
    <reaction evidence="1">
        <text>tRNA(Pro) + L-proline + ATP = L-prolyl-tRNA(Pro) + AMP + diphosphate</text>
        <dbReference type="Rhea" id="RHEA:14305"/>
        <dbReference type="Rhea" id="RHEA-COMP:9700"/>
        <dbReference type="Rhea" id="RHEA-COMP:9702"/>
        <dbReference type="ChEBI" id="CHEBI:30616"/>
        <dbReference type="ChEBI" id="CHEBI:33019"/>
        <dbReference type="ChEBI" id="CHEBI:60039"/>
        <dbReference type="ChEBI" id="CHEBI:78442"/>
        <dbReference type="ChEBI" id="CHEBI:78532"/>
        <dbReference type="ChEBI" id="CHEBI:456215"/>
        <dbReference type="EC" id="6.1.1.15"/>
    </reaction>
</comment>
<comment type="subunit">
    <text evidence="1">Homodimer.</text>
</comment>
<comment type="subcellular location">
    <subcellularLocation>
        <location evidence="1">Cytoplasm</location>
    </subcellularLocation>
</comment>
<comment type="domain">
    <text evidence="1">Consists of three domains: the N-terminal catalytic domain, the anticodon-binding domain and the C-terminal extension.</text>
</comment>
<comment type="similarity">
    <text evidence="1">Belongs to the class-II aminoacyl-tRNA synthetase family. ProS type 3 subfamily.</text>
</comment>
<proteinExistence type="inferred from homology"/>
<reference key="1">
    <citation type="submission" date="2007-10" db="EMBL/GenBank/DDBJ databases">
        <title>Complete genome of Alkaliphilus oremlandii OhILAs.</title>
        <authorList>
            <person name="Copeland A."/>
            <person name="Lucas S."/>
            <person name="Lapidus A."/>
            <person name="Barry K."/>
            <person name="Detter J.C."/>
            <person name="Glavina del Rio T."/>
            <person name="Hammon N."/>
            <person name="Israni S."/>
            <person name="Dalin E."/>
            <person name="Tice H."/>
            <person name="Pitluck S."/>
            <person name="Chain P."/>
            <person name="Malfatti S."/>
            <person name="Shin M."/>
            <person name="Vergez L."/>
            <person name="Schmutz J."/>
            <person name="Larimer F."/>
            <person name="Land M."/>
            <person name="Hauser L."/>
            <person name="Kyrpides N."/>
            <person name="Mikhailova N."/>
            <person name="Stolz J.F."/>
            <person name="Dawson A."/>
            <person name="Fisher E."/>
            <person name="Crable B."/>
            <person name="Perera E."/>
            <person name="Lisak J."/>
            <person name="Ranganathan M."/>
            <person name="Basu P."/>
            <person name="Richardson P."/>
        </authorList>
    </citation>
    <scope>NUCLEOTIDE SEQUENCE [LARGE SCALE GENOMIC DNA]</scope>
    <source>
        <strain>OhILAs</strain>
    </source>
</reference>
<keyword id="KW-0030">Aminoacyl-tRNA synthetase</keyword>
<keyword id="KW-0067">ATP-binding</keyword>
<keyword id="KW-0963">Cytoplasm</keyword>
<keyword id="KW-0436">Ligase</keyword>
<keyword id="KW-0547">Nucleotide-binding</keyword>
<keyword id="KW-0648">Protein biosynthesis</keyword>
<keyword id="KW-1185">Reference proteome</keyword>
<sequence length="480" mass="55575">MSKKEKQFVEEITPMEVDFAQWYTDVIKKTDLVDYSPVKGFMVIKPYGYAIWENIQNYMDKRFKETGHKNCYFPLLIPESLLKKEAEHVEGFAPEVAWVTHGGNEELAERLCVRPTSETIICEMYSKWLTSYRDLPFLYNQWCSVVRWEKSTRPFLRTSEFLWQEGHTLHETYEEAQAETLQMLNIYRETAENLLAMPVVIGQKSEKEKFAGAYATYTMEALMHDGKALQAGTSHNLGQHFTTAFDITYSDRNGELKHPYHTSWGVSTRLIGGIIMVHGDNRGLVLPPGIAPTQVVIVPVASHKEGVLDKANELRDRLKDKFRVELDDRDNYSPGWKFNEWEMKGVPIRIEIGPRDIENNQAMLFRRDELEKDAVSLDDLEEAVEKLLEDINNNLLYKAKMMRDEKTYIVKTFDEMKEVMEIKPGFVKAMWCGERACEEHVKAETGVTIRCIPFEQENLGHTCAFCGKEAKHMVYLAKAY</sequence>
<name>SYP_ALKOO</name>
<gene>
    <name evidence="1" type="primary">proS</name>
    <name type="ordered locus">Clos_0465</name>
</gene>
<organism>
    <name type="scientific">Alkaliphilus oremlandii (strain OhILAs)</name>
    <name type="common">Clostridium oremlandii (strain OhILAs)</name>
    <dbReference type="NCBI Taxonomy" id="350688"/>
    <lineage>
        <taxon>Bacteria</taxon>
        <taxon>Bacillati</taxon>
        <taxon>Bacillota</taxon>
        <taxon>Clostridia</taxon>
        <taxon>Peptostreptococcales</taxon>
        <taxon>Natronincolaceae</taxon>
        <taxon>Alkaliphilus</taxon>
    </lineage>
</organism>
<feature type="chain" id="PRO_1000069189" description="Proline--tRNA ligase">
    <location>
        <begin position="1"/>
        <end position="480"/>
    </location>
</feature>
<protein>
    <recommendedName>
        <fullName evidence="1">Proline--tRNA ligase</fullName>
        <ecNumber evidence="1">6.1.1.15</ecNumber>
    </recommendedName>
    <alternativeName>
        <fullName evidence="1">Prolyl-tRNA synthetase</fullName>
        <shortName evidence="1">ProRS</shortName>
    </alternativeName>
</protein>
<accession>A8MLB3</accession>
<dbReference type="EC" id="6.1.1.15" evidence="1"/>
<dbReference type="EMBL" id="CP000853">
    <property type="protein sequence ID" value="ABW18027.1"/>
    <property type="molecule type" value="Genomic_DNA"/>
</dbReference>
<dbReference type="RefSeq" id="WP_012158342.1">
    <property type="nucleotide sequence ID" value="NC_009922.1"/>
</dbReference>
<dbReference type="SMR" id="A8MLB3"/>
<dbReference type="STRING" id="350688.Clos_0465"/>
<dbReference type="KEGG" id="aoe:Clos_0465"/>
<dbReference type="eggNOG" id="COG0442">
    <property type="taxonomic scope" value="Bacteria"/>
</dbReference>
<dbReference type="HOGENOM" id="CLU_001882_4_2_9"/>
<dbReference type="OrthoDB" id="9809052at2"/>
<dbReference type="Proteomes" id="UP000000269">
    <property type="component" value="Chromosome"/>
</dbReference>
<dbReference type="GO" id="GO:0017101">
    <property type="term" value="C:aminoacyl-tRNA synthetase multienzyme complex"/>
    <property type="evidence" value="ECO:0007669"/>
    <property type="project" value="TreeGrafter"/>
</dbReference>
<dbReference type="GO" id="GO:0005737">
    <property type="term" value="C:cytoplasm"/>
    <property type="evidence" value="ECO:0007669"/>
    <property type="project" value="UniProtKB-SubCell"/>
</dbReference>
<dbReference type="GO" id="GO:0005524">
    <property type="term" value="F:ATP binding"/>
    <property type="evidence" value="ECO:0007669"/>
    <property type="project" value="UniProtKB-UniRule"/>
</dbReference>
<dbReference type="GO" id="GO:0140096">
    <property type="term" value="F:catalytic activity, acting on a protein"/>
    <property type="evidence" value="ECO:0007669"/>
    <property type="project" value="UniProtKB-ARBA"/>
</dbReference>
<dbReference type="GO" id="GO:0004827">
    <property type="term" value="F:proline-tRNA ligase activity"/>
    <property type="evidence" value="ECO:0007669"/>
    <property type="project" value="UniProtKB-UniRule"/>
</dbReference>
<dbReference type="GO" id="GO:0016740">
    <property type="term" value="F:transferase activity"/>
    <property type="evidence" value="ECO:0007669"/>
    <property type="project" value="UniProtKB-ARBA"/>
</dbReference>
<dbReference type="GO" id="GO:0006433">
    <property type="term" value="P:prolyl-tRNA aminoacylation"/>
    <property type="evidence" value="ECO:0007669"/>
    <property type="project" value="UniProtKB-UniRule"/>
</dbReference>
<dbReference type="CDD" id="cd00862">
    <property type="entry name" value="ProRS_anticodon_zinc"/>
    <property type="match status" value="1"/>
</dbReference>
<dbReference type="CDD" id="cd00778">
    <property type="entry name" value="ProRS_core_arch_euk"/>
    <property type="match status" value="1"/>
</dbReference>
<dbReference type="FunFam" id="3.40.50.800:FF:000005">
    <property type="entry name" value="bifunctional glutamate/proline--tRNA ligase"/>
    <property type="match status" value="1"/>
</dbReference>
<dbReference type="FunFam" id="3.30.110.30:FF:000005">
    <property type="entry name" value="Proline--tRNA ligase"/>
    <property type="match status" value="1"/>
</dbReference>
<dbReference type="FunFam" id="3.30.930.10:FF:000023">
    <property type="entry name" value="Proline--tRNA ligase"/>
    <property type="match status" value="1"/>
</dbReference>
<dbReference type="Gene3D" id="3.40.50.800">
    <property type="entry name" value="Anticodon-binding domain"/>
    <property type="match status" value="1"/>
</dbReference>
<dbReference type="Gene3D" id="3.30.930.10">
    <property type="entry name" value="Bira Bifunctional Protein, Domain 2"/>
    <property type="match status" value="1"/>
</dbReference>
<dbReference type="Gene3D" id="3.30.110.30">
    <property type="entry name" value="C-terminal domain of ProRS"/>
    <property type="match status" value="1"/>
</dbReference>
<dbReference type="HAMAP" id="MF_01571">
    <property type="entry name" value="Pro_tRNA_synth_type3"/>
    <property type="match status" value="1"/>
</dbReference>
<dbReference type="InterPro" id="IPR002314">
    <property type="entry name" value="aa-tRNA-synt_IIb"/>
</dbReference>
<dbReference type="InterPro" id="IPR006195">
    <property type="entry name" value="aa-tRNA-synth_II"/>
</dbReference>
<dbReference type="InterPro" id="IPR045864">
    <property type="entry name" value="aa-tRNA-synth_II/BPL/LPL"/>
</dbReference>
<dbReference type="InterPro" id="IPR004154">
    <property type="entry name" value="Anticodon-bd"/>
</dbReference>
<dbReference type="InterPro" id="IPR036621">
    <property type="entry name" value="Anticodon-bd_dom_sf"/>
</dbReference>
<dbReference type="InterPro" id="IPR002316">
    <property type="entry name" value="Pro-tRNA-ligase_IIa"/>
</dbReference>
<dbReference type="InterPro" id="IPR004499">
    <property type="entry name" value="Pro-tRNA-ligase_IIa_arc-type"/>
</dbReference>
<dbReference type="InterPro" id="IPR016061">
    <property type="entry name" value="Pro-tRNA_ligase_II_C"/>
</dbReference>
<dbReference type="InterPro" id="IPR017449">
    <property type="entry name" value="Pro-tRNA_synth_II"/>
</dbReference>
<dbReference type="InterPro" id="IPR033721">
    <property type="entry name" value="ProRS_core_arch_euk"/>
</dbReference>
<dbReference type="NCBIfam" id="TIGR00408">
    <property type="entry name" value="proS_fam_I"/>
    <property type="match status" value="1"/>
</dbReference>
<dbReference type="PANTHER" id="PTHR43382:SF2">
    <property type="entry name" value="BIFUNCTIONAL GLUTAMATE_PROLINE--TRNA LIGASE"/>
    <property type="match status" value="1"/>
</dbReference>
<dbReference type="PANTHER" id="PTHR43382">
    <property type="entry name" value="PROLYL-TRNA SYNTHETASE"/>
    <property type="match status" value="1"/>
</dbReference>
<dbReference type="Pfam" id="PF03129">
    <property type="entry name" value="HGTP_anticodon"/>
    <property type="match status" value="1"/>
</dbReference>
<dbReference type="Pfam" id="PF09180">
    <property type="entry name" value="ProRS-C_1"/>
    <property type="match status" value="1"/>
</dbReference>
<dbReference type="Pfam" id="PF00587">
    <property type="entry name" value="tRNA-synt_2b"/>
    <property type="match status" value="1"/>
</dbReference>
<dbReference type="PRINTS" id="PR01046">
    <property type="entry name" value="TRNASYNTHPRO"/>
</dbReference>
<dbReference type="SMART" id="SM00946">
    <property type="entry name" value="ProRS-C_1"/>
    <property type="match status" value="1"/>
</dbReference>
<dbReference type="SUPFAM" id="SSF64586">
    <property type="entry name" value="C-terminal domain of ProRS"/>
    <property type="match status" value="1"/>
</dbReference>
<dbReference type="SUPFAM" id="SSF52954">
    <property type="entry name" value="Class II aaRS ABD-related"/>
    <property type="match status" value="1"/>
</dbReference>
<dbReference type="SUPFAM" id="SSF55681">
    <property type="entry name" value="Class II aaRS and biotin synthetases"/>
    <property type="match status" value="1"/>
</dbReference>
<dbReference type="PROSITE" id="PS50862">
    <property type="entry name" value="AA_TRNA_LIGASE_II"/>
    <property type="match status" value="1"/>
</dbReference>
<evidence type="ECO:0000255" key="1">
    <source>
        <dbReference type="HAMAP-Rule" id="MF_01571"/>
    </source>
</evidence>